<organism>
    <name type="scientific">Actinobacillus pleuropneumoniae serotype 5b (strain L20)</name>
    <dbReference type="NCBI Taxonomy" id="416269"/>
    <lineage>
        <taxon>Bacteria</taxon>
        <taxon>Pseudomonadati</taxon>
        <taxon>Pseudomonadota</taxon>
        <taxon>Gammaproteobacteria</taxon>
        <taxon>Pasteurellales</taxon>
        <taxon>Pasteurellaceae</taxon>
        <taxon>Actinobacillus</taxon>
    </lineage>
</organism>
<proteinExistence type="inferred from homology"/>
<feature type="chain" id="PRO_0000301465" description="Putative N-acetylmannosamine-6-phosphate 2-epimerase">
    <location>
        <begin position="1"/>
        <end position="229"/>
    </location>
</feature>
<dbReference type="EC" id="5.1.3.9" evidence="1"/>
<dbReference type="EMBL" id="CP000569">
    <property type="protein sequence ID" value="ABN74836.1"/>
    <property type="molecule type" value="Genomic_DNA"/>
</dbReference>
<dbReference type="RefSeq" id="WP_005599263.1">
    <property type="nucleotide sequence ID" value="NC_009053.1"/>
</dbReference>
<dbReference type="SMR" id="A3N350"/>
<dbReference type="STRING" id="416269.APL_1752"/>
<dbReference type="EnsemblBacteria" id="ABN74836">
    <property type="protein sequence ID" value="ABN74836"/>
    <property type="gene ID" value="APL_1752"/>
</dbReference>
<dbReference type="KEGG" id="apl:APL_1752"/>
<dbReference type="eggNOG" id="COG3010">
    <property type="taxonomic scope" value="Bacteria"/>
</dbReference>
<dbReference type="HOGENOM" id="CLU_086300_0_0_6"/>
<dbReference type="UniPathway" id="UPA00629">
    <property type="reaction ID" value="UER00682"/>
</dbReference>
<dbReference type="Proteomes" id="UP000001432">
    <property type="component" value="Chromosome"/>
</dbReference>
<dbReference type="GO" id="GO:0005829">
    <property type="term" value="C:cytosol"/>
    <property type="evidence" value="ECO:0007669"/>
    <property type="project" value="TreeGrafter"/>
</dbReference>
<dbReference type="GO" id="GO:0047465">
    <property type="term" value="F:N-acylglucosamine-6-phosphate 2-epimerase activity"/>
    <property type="evidence" value="ECO:0007669"/>
    <property type="project" value="UniProtKB-EC"/>
</dbReference>
<dbReference type="GO" id="GO:0005975">
    <property type="term" value="P:carbohydrate metabolic process"/>
    <property type="evidence" value="ECO:0007669"/>
    <property type="project" value="UniProtKB-UniRule"/>
</dbReference>
<dbReference type="GO" id="GO:0006053">
    <property type="term" value="P:N-acetylmannosamine catabolic process"/>
    <property type="evidence" value="ECO:0007669"/>
    <property type="project" value="TreeGrafter"/>
</dbReference>
<dbReference type="GO" id="GO:0019262">
    <property type="term" value="P:N-acetylneuraminate catabolic process"/>
    <property type="evidence" value="ECO:0007669"/>
    <property type="project" value="UniProtKB-UniRule"/>
</dbReference>
<dbReference type="CDD" id="cd04729">
    <property type="entry name" value="NanE"/>
    <property type="match status" value="1"/>
</dbReference>
<dbReference type="FunFam" id="3.20.20.70:FF:000035">
    <property type="entry name" value="Putative N-acetylmannosamine-6-phosphate 2-epimerase"/>
    <property type="match status" value="1"/>
</dbReference>
<dbReference type="Gene3D" id="3.20.20.70">
    <property type="entry name" value="Aldolase class I"/>
    <property type="match status" value="1"/>
</dbReference>
<dbReference type="HAMAP" id="MF_01235">
    <property type="entry name" value="ManNAc6P_epimer"/>
    <property type="match status" value="1"/>
</dbReference>
<dbReference type="InterPro" id="IPR013785">
    <property type="entry name" value="Aldolase_TIM"/>
</dbReference>
<dbReference type="InterPro" id="IPR007260">
    <property type="entry name" value="NanE"/>
</dbReference>
<dbReference type="InterPro" id="IPR011060">
    <property type="entry name" value="RibuloseP-bd_barrel"/>
</dbReference>
<dbReference type="NCBIfam" id="NF002231">
    <property type="entry name" value="PRK01130.1"/>
    <property type="match status" value="1"/>
</dbReference>
<dbReference type="PANTHER" id="PTHR36204">
    <property type="entry name" value="N-ACETYLMANNOSAMINE-6-PHOSPHATE 2-EPIMERASE-RELATED"/>
    <property type="match status" value="1"/>
</dbReference>
<dbReference type="PANTHER" id="PTHR36204:SF1">
    <property type="entry name" value="N-ACETYLMANNOSAMINE-6-PHOSPHATE 2-EPIMERASE-RELATED"/>
    <property type="match status" value="1"/>
</dbReference>
<dbReference type="Pfam" id="PF04131">
    <property type="entry name" value="NanE"/>
    <property type="match status" value="1"/>
</dbReference>
<dbReference type="SUPFAM" id="SSF51366">
    <property type="entry name" value="Ribulose-phoshate binding barrel"/>
    <property type="match status" value="1"/>
</dbReference>
<name>NANE_ACTP2</name>
<sequence length="229" mass="24161">MSKLSHSEVLNTIRNGLIASCQPVDDGPMDKPEIVAAMAQASLIGGAAGLRIEGVDNLKATRPTVKAPIIAIVKRDLPDSPVRITPFLQDIDDLAAAGADIIAVDGTDRVRPVTIEAALKRIHELGCLAMADCSTLAEGLYCQQLGFDIVGSTMSGYTGGEVPNEPDYQLVKDLKAAGCFVMAEGRYNSPQLAKTAIEIGADCVTVGSALTRLEHIVGWFADEIKTAKV</sequence>
<comment type="function">
    <text evidence="1">Converts N-acetylmannosamine-6-phosphate (ManNAc-6-P) to N-acetylglucosamine-6-phosphate (GlcNAc-6-P).</text>
</comment>
<comment type="catalytic activity">
    <reaction evidence="1">
        <text>an N-acyl-D-glucosamine 6-phosphate = an N-acyl-D-mannosamine 6-phosphate</text>
        <dbReference type="Rhea" id="RHEA:23932"/>
        <dbReference type="ChEBI" id="CHEBI:57599"/>
        <dbReference type="ChEBI" id="CHEBI:57666"/>
        <dbReference type="EC" id="5.1.3.9"/>
    </reaction>
</comment>
<comment type="pathway">
    <text evidence="1">Amino-sugar metabolism; N-acetylneuraminate degradation; D-fructose 6-phosphate from N-acetylneuraminate: step 3/5.</text>
</comment>
<comment type="similarity">
    <text evidence="1">Belongs to the NanE family.</text>
</comment>
<gene>
    <name evidence="1" type="primary">nanE</name>
    <name type="ordered locus">APL_1752</name>
</gene>
<evidence type="ECO:0000255" key="1">
    <source>
        <dbReference type="HAMAP-Rule" id="MF_01235"/>
    </source>
</evidence>
<keyword id="KW-0119">Carbohydrate metabolism</keyword>
<keyword id="KW-0413">Isomerase</keyword>
<keyword id="KW-1185">Reference proteome</keyword>
<accession>A3N350</accession>
<protein>
    <recommendedName>
        <fullName evidence="1">Putative N-acetylmannosamine-6-phosphate 2-epimerase</fullName>
        <ecNumber evidence="1">5.1.3.9</ecNumber>
    </recommendedName>
    <alternativeName>
        <fullName evidence="1">ManNAc-6-P epimerase</fullName>
    </alternativeName>
</protein>
<reference key="1">
    <citation type="journal article" date="2008" name="J. Bacteriol.">
        <title>The complete genome sequence of Actinobacillus pleuropneumoniae L20 (serotype 5b).</title>
        <authorList>
            <person name="Foote S.J."/>
            <person name="Bosse J.T."/>
            <person name="Bouevitch A.B."/>
            <person name="Langford P.R."/>
            <person name="Young N.M."/>
            <person name="Nash J.H.E."/>
        </authorList>
    </citation>
    <scope>NUCLEOTIDE SEQUENCE [LARGE SCALE GENOMIC DNA]</scope>
    <source>
        <strain>L20</strain>
    </source>
</reference>